<dbReference type="EMBL" id="CP000976">
    <property type="protein sequence ID" value="ACH93074.1"/>
    <property type="molecule type" value="Genomic_DNA"/>
</dbReference>
<dbReference type="RefSeq" id="WP_012537886.1">
    <property type="nucleotide sequence ID" value="NC_011229.1"/>
</dbReference>
<dbReference type="SMR" id="B5RLI9"/>
<dbReference type="STRING" id="412419.BDU_118"/>
<dbReference type="KEGG" id="bdu:BDU_118"/>
<dbReference type="eggNOG" id="COG0360">
    <property type="taxonomic scope" value="Bacteria"/>
</dbReference>
<dbReference type="HOGENOM" id="CLU_1902635_0_0_12"/>
<dbReference type="OrthoDB" id="9812702at2"/>
<dbReference type="Proteomes" id="UP000000611">
    <property type="component" value="Chromosome"/>
</dbReference>
<dbReference type="GO" id="GO:1990904">
    <property type="term" value="C:ribonucleoprotein complex"/>
    <property type="evidence" value="ECO:0007669"/>
    <property type="project" value="UniProtKB-KW"/>
</dbReference>
<dbReference type="GO" id="GO:0005840">
    <property type="term" value="C:ribosome"/>
    <property type="evidence" value="ECO:0007669"/>
    <property type="project" value="UniProtKB-KW"/>
</dbReference>
<dbReference type="GO" id="GO:0019843">
    <property type="term" value="F:rRNA binding"/>
    <property type="evidence" value="ECO:0007669"/>
    <property type="project" value="UniProtKB-UniRule"/>
</dbReference>
<dbReference type="GO" id="GO:0003735">
    <property type="term" value="F:structural constituent of ribosome"/>
    <property type="evidence" value="ECO:0007669"/>
    <property type="project" value="InterPro"/>
</dbReference>
<dbReference type="GO" id="GO:0006412">
    <property type="term" value="P:translation"/>
    <property type="evidence" value="ECO:0007669"/>
    <property type="project" value="UniProtKB-UniRule"/>
</dbReference>
<dbReference type="CDD" id="cd00473">
    <property type="entry name" value="bS6"/>
    <property type="match status" value="1"/>
</dbReference>
<dbReference type="Gene3D" id="3.30.70.60">
    <property type="match status" value="1"/>
</dbReference>
<dbReference type="HAMAP" id="MF_00360">
    <property type="entry name" value="Ribosomal_bS6"/>
    <property type="match status" value="1"/>
</dbReference>
<dbReference type="InterPro" id="IPR000529">
    <property type="entry name" value="Ribosomal_bS6"/>
</dbReference>
<dbReference type="InterPro" id="IPR035980">
    <property type="entry name" value="Ribosomal_bS6_sf"/>
</dbReference>
<dbReference type="InterPro" id="IPR020814">
    <property type="entry name" value="Ribosomal_S6_plastid/chlpt"/>
</dbReference>
<dbReference type="InterPro" id="IPR014717">
    <property type="entry name" value="Transl_elong_EF1B/ribsomal_bS6"/>
</dbReference>
<dbReference type="NCBIfam" id="TIGR00166">
    <property type="entry name" value="S6"/>
    <property type="match status" value="1"/>
</dbReference>
<dbReference type="Pfam" id="PF01250">
    <property type="entry name" value="Ribosomal_S6"/>
    <property type="match status" value="1"/>
</dbReference>
<dbReference type="SUPFAM" id="SSF54995">
    <property type="entry name" value="Ribosomal protein S6"/>
    <property type="match status" value="1"/>
</dbReference>
<gene>
    <name evidence="1" type="primary">rpsF</name>
    <name type="ordered locus">BDU_118</name>
</gene>
<comment type="function">
    <text evidence="1">Binds together with bS18 to 16S ribosomal RNA.</text>
</comment>
<comment type="similarity">
    <text evidence="1">Belongs to the bacterial ribosomal protein bS6 family.</text>
</comment>
<feature type="chain" id="PRO_1000120711" description="Small ribosomal subunit protein bS6">
    <location>
        <begin position="1"/>
        <end position="134"/>
    </location>
</feature>
<feature type="region of interest" description="Disordered" evidence="2">
    <location>
        <begin position="113"/>
        <end position="134"/>
    </location>
</feature>
<feature type="compositionally biased region" description="Basic and acidic residues" evidence="2">
    <location>
        <begin position="113"/>
        <end position="122"/>
    </location>
</feature>
<name>RS6_BORDL</name>
<proteinExistence type="inferred from homology"/>
<accession>B5RLI9</accession>
<protein>
    <recommendedName>
        <fullName evidence="1">Small ribosomal subunit protein bS6</fullName>
    </recommendedName>
    <alternativeName>
        <fullName evidence="3">30S ribosomal protein S6</fullName>
    </alternativeName>
</protein>
<evidence type="ECO:0000255" key="1">
    <source>
        <dbReference type="HAMAP-Rule" id="MF_00360"/>
    </source>
</evidence>
<evidence type="ECO:0000256" key="2">
    <source>
        <dbReference type="SAM" id="MobiDB-lite"/>
    </source>
</evidence>
<evidence type="ECO:0000305" key="3"/>
<keyword id="KW-0687">Ribonucleoprotein</keyword>
<keyword id="KW-0689">Ribosomal protein</keyword>
<keyword id="KW-0694">RNA-binding</keyword>
<keyword id="KW-0699">rRNA-binding</keyword>
<reference key="1">
    <citation type="journal article" date="2008" name="PLoS Genet.">
        <title>The genome of Borrelia recurrentis, the agent of deadly louse-borne relapsing fever, is a degraded subset of tick-borne Borrelia duttonii.</title>
        <authorList>
            <person name="Lescot M."/>
            <person name="Audic S."/>
            <person name="Robert C."/>
            <person name="Nguyen T.T."/>
            <person name="Blanc G."/>
            <person name="Cutler S.J."/>
            <person name="Wincker P."/>
            <person name="Couloux A."/>
            <person name="Claverie J.-M."/>
            <person name="Raoult D."/>
            <person name="Drancourt M."/>
        </authorList>
    </citation>
    <scope>NUCLEOTIDE SEQUENCE [LARGE SCALE GENOMIC DNA]</scope>
    <source>
        <strain>Ly</strain>
    </source>
</reference>
<sequence length="134" mass="16007">MIKKYEGCFLFRSEELEYKSALEEVKKQLVAFGAVDFVENSIGERALEYPVRKQLRGRYEIIEFKMASDNLRELEAQLKLIKNLLRYMILVKINRKVSVKKVKRRNFREYRDNRDIKEKEQPSESNVDADLKVN</sequence>
<organism>
    <name type="scientific">Borrelia duttonii (strain Ly)</name>
    <dbReference type="NCBI Taxonomy" id="412419"/>
    <lineage>
        <taxon>Bacteria</taxon>
        <taxon>Pseudomonadati</taxon>
        <taxon>Spirochaetota</taxon>
        <taxon>Spirochaetia</taxon>
        <taxon>Spirochaetales</taxon>
        <taxon>Borreliaceae</taxon>
        <taxon>Borrelia</taxon>
    </lineage>
</organism>